<comment type="function">
    <text evidence="1">Member of the two-component regulatory system ArlS/ArlR involved in the regulation of adhesion, autolysis, multidrug resistance and virulence. ArlS probably functions as a sensor protein kinase which is autophosphorylated at a histidine residue and transfers its phosphate group to ArlR (By similarity).</text>
</comment>
<comment type="catalytic activity">
    <reaction>
        <text>ATP + protein L-histidine = ADP + protein N-phospho-L-histidine.</text>
        <dbReference type="EC" id="2.7.13.3"/>
    </reaction>
</comment>
<comment type="subcellular location">
    <subcellularLocation>
        <location evidence="1">Cell membrane</location>
        <topology evidence="1">Multi-pass membrane protein</topology>
    </subcellularLocation>
</comment>
<comment type="PTM">
    <text evidence="1">Autophosphorylated.</text>
</comment>
<proteinExistence type="evidence at protein level"/>
<organism>
    <name type="scientific">Staphylococcus aureus (strain N315)</name>
    <dbReference type="NCBI Taxonomy" id="158879"/>
    <lineage>
        <taxon>Bacteria</taxon>
        <taxon>Bacillati</taxon>
        <taxon>Bacillota</taxon>
        <taxon>Bacilli</taxon>
        <taxon>Bacillales</taxon>
        <taxon>Staphylococcaceae</taxon>
        <taxon>Staphylococcus</taxon>
    </lineage>
</organism>
<gene>
    <name type="primary">arlS</name>
    <name type="ordered locus">SA1246</name>
</gene>
<name>ARLS_STAAN</name>
<accession>Q7A5N3</accession>
<evidence type="ECO:0000250" key="1"/>
<evidence type="ECO:0000255" key="2"/>
<evidence type="ECO:0000255" key="3">
    <source>
        <dbReference type="PROSITE-ProRule" id="PRU00102"/>
    </source>
</evidence>
<evidence type="ECO:0000255" key="4">
    <source>
        <dbReference type="PROSITE-ProRule" id="PRU00107"/>
    </source>
</evidence>
<keyword id="KW-0067">ATP-binding</keyword>
<keyword id="KW-1003">Cell membrane</keyword>
<keyword id="KW-0418">Kinase</keyword>
<keyword id="KW-0472">Membrane</keyword>
<keyword id="KW-0547">Nucleotide-binding</keyword>
<keyword id="KW-0597">Phosphoprotein</keyword>
<keyword id="KW-0808">Transferase</keyword>
<keyword id="KW-0812">Transmembrane</keyword>
<keyword id="KW-1133">Transmembrane helix</keyword>
<keyword id="KW-0902">Two-component regulatory system</keyword>
<keyword id="KW-0843">Virulence</keyword>
<sequence length="451" mass="52400">MTKRKLRNNWIIVTTMITFVTIFLFCLIIIFFLKDTLHNSELDDAERSSSDINNLFHSKPVKDISALDLNASLGNFQEIIIYDEHNNKLFETSNDNTVRVEPGYEHRYFDRVIKKRYKGIEYLIIKEPITTQDFKGYSLLIHSLENYDNIVKSLYIIALAFGVIATIITATISYVFSTQITKPLVSLSNKMIEIRRDGFQNKLQLNTNYEEIDNLANTFNEMMSQIEESFNQQRQFVEDASHELRTPLQIIQGHLNLIQRWGKKDPAVLEESLNISIEEMNRIIKLVEELLELTKGDVNDISSEAQTVHINDEIRSRIHSLKQLHPDYQFDTDLTSKNLEIKMKPHQFEQLFLIFIDNAIKYDVKNKKIKVKTRLKNKQKIIEITDHGIGIPEEDQDFIFDRFYRVDKSRSRSQGGNGLGLSIAQKIIQLNGGSIKIKSEINKGTTFKIIF</sequence>
<protein>
    <recommendedName>
        <fullName>Signal transduction histidine-protein kinase ArlS</fullName>
        <ecNumber>2.7.13.3</ecNumber>
    </recommendedName>
</protein>
<dbReference type="EC" id="2.7.13.3"/>
<dbReference type="EMBL" id="BA000018">
    <property type="protein sequence ID" value="BAB42506.1"/>
    <property type="molecule type" value="Genomic_DNA"/>
</dbReference>
<dbReference type="PIR" id="F89918">
    <property type="entry name" value="F89918"/>
</dbReference>
<dbReference type="RefSeq" id="WP_000166801.1">
    <property type="nucleotide sequence ID" value="NC_002745.2"/>
</dbReference>
<dbReference type="SMR" id="Q7A5N3"/>
<dbReference type="EnsemblBacteria" id="BAB42506">
    <property type="protein sequence ID" value="BAB42506"/>
    <property type="gene ID" value="BAB42506"/>
</dbReference>
<dbReference type="KEGG" id="sau:SA1246"/>
<dbReference type="HOGENOM" id="CLU_000445_89_6_9"/>
<dbReference type="GO" id="GO:0005886">
    <property type="term" value="C:plasma membrane"/>
    <property type="evidence" value="ECO:0007669"/>
    <property type="project" value="UniProtKB-SubCell"/>
</dbReference>
<dbReference type="GO" id="GO:0005524">
    <property type="term" value="F:ATP binding"/>
    <property type="evidence" value="ECO:0007669"/>
    <property type="project" value="UniProtKB-KW"/>
</dbReference>
<dbReference type="GO" id="GO:0000155">
    <property type="term" value="F:phosphorelay sensor kinase activity"/>
    <property type="evidence" value="ECO:0007669"/>
    <property type="project" value="InterPro"/>
</dbReference>
<dbReference type="CDD" id="cd00075">
    <property type="entry name" value="HATPase"/>
    <property type="match status" value="1"/>
</dbReference>
<dbReference type="CDD" id="cd00082">
    <property type="entry name" value="HisKA"/>
    <property type="match status" value="1"/>
</dbReference>
<dbReference type="FunFam" id="3.30.565.10:FF:000006">
    <property type="entry name" value="Sensor histidine kinase WalK"/>
    <property type="match status" value="1"/>
</dbReference>
<dbReference type="FunFam" id="1.10.287.130:FF:000001">
    <property type="entry name" value="Two-component sensor histidine kinase"/>
    <property type="match status" value="1"/>
</dbReference>
<dbReference type="Gene3D" id="1.10.287.130">
    <property type="match status" value="1"/>
</dbReference>
<dbReference type="Gene3D" id="6.10.340.10">
    <property type="match status" value="1"/>
</dbReference>
<dbReference type="Gene3D" id="3.30.565.10">
    <property type="entry name" value="Histidine kinase-like ATPase, C-terminal domain"/>
    <property type="match status" value="1"/>
</dbReference>
<dbReference type="InterPro" id="IPR041610">
    <property type="entry name" value="ArlS_N"/>
</dbReference>
<dbReference type="InterPro" id="IPR050398">
    <property type="entry name" value="Bact_Sensor_His_Kinase"/>
</dbReference>
<dbReference type="InterPro" id="IPR003660">
    <property type="entry name" value="HAMP_dom"/>
</dbReference>
<dbReference type="InterPro" id="IPR036890">
    <property type="entry name" value="HATPase_C_sf"/>
</dbReference>
<dbReference type="InterPro" id="IPR005467">
    <property type="entry name" value="His_kinase_dom"/>
</dbReference>
<dbReference type="InterPro" id="IPR003661">
    <property type="entry name" value="HisK_dim/P_dom"/>
</dbReference>
<dbReference type="InterPro" id="IPR036097">
    <property type="entry name" value="HisK_dim/P_sf"/>
</dbReference>
<dbReference type="InterPro" id="IPR004358">
    <property type="entry name" value="Sig_transdc_His_kin-like_C"/>
</dbReference>
<dbReference type="PANTHER" id="PTHR45528:SF12">
    <property type="entry name" value="SENSOR HISTIDINE KINASE ARSS"/>
    <property type="match status" value="1"/>
</dbReference>
<dbReference type="PANTHER" id="PTHR45528">
    <property type="entry name" value="SENSOR HISTIDINE KINASE CPXA"/>
    <property type="match status" value="1"/>
</dbReference>
<dbReference type="Pfam" id="PF18719">
    <property type="entry name" value="ArlS_N"/>
    <property type="match status" value="1"/>
</dbReference>
<dbReference type="Pfam" id="PF02518">
    <property type="entry name" value="HATPase_c"/>
    <property type="match status" value="1"/>
</dbReference>
<dbReference type="Pfam" id="PF00512">
    <property type="entry name" value="HisKA"/>
    <property type="match status" value="1"/>
</dbReference>
<dbReference type="PRINTS" id="PR00344">
    <property type="entry name" value="BCTRLSENSOR"/>
</dbReference>
<dbReference type="SMART" id="SM00387">
    <property type="entry name" value="HATPase_c"/>
    <property type="match status" value="1"/>
</dbReference>
<dbReference type="SMART" id="SM00388">
    <property type="entry name" value="HisKA"/>
    <property type="match status" value="1"/>
</dbReference>
<dbReference type="SUPFAM" id="SSF55874">
    <property type="entry name" value="ATPase domain of HSP90 chaperone/DNA topoisomerase II/histidine kinase"/>
    <property type="match status" value="1"/>
</dbReference>
<dbReference type="SUPFAM" id="SSF158472">
    <property type="entry name" value="HAMP domain-like"/>
    <property type="match status" value="1"/>
</dbReference>
<dbReference type="SUPFAM" id="SSF47384">
    <property type="entry name" value="Homodimeric domain of signal transducing histidine kinase"/>
    <property type="match status" value="1"/>
</dbReference>
<dbReference type="PROSITE" id="PS50885">
    <property type="entry name" value="HAMP"/>
    <property type="match status" value="1"/>
</dbReference>
<dbReference type="PROSITE" id="PS50109">
    <property type="entry name" value="HIS_KIN"/>
    <property type="match status" value="1"/>
</dbReference>
<feature type="chain" id="PRO_0000074691" description="Signal transduction histidine-protein kinase ArlS">
    <location>
        <begin position="1"/>
        <end position="451"/>
    </location>
</feature>
<feature type="transmembrane region" description="Helical" evidence="2">
    <location>
        <begin position="11"/>
        <end position="31"/>
    </location>
</feature>
<feature type="transmembrane region" description="Helical" evidence="2">
    <location>
        <begin position="156"/>
        <end position="176"/>
    </location>
</feature>
<feature type="domain" description="HAMP" evidence="3">
    <location>
        <begin position="178"/>
        <end position="231"/>
    </location>
</feature>
<feature type="domain" description="Histidine kinase" evidence="4">
    <location>
        <begin position="239"/>
        <end position="451"/>
    </location>
</feature>
<feature type="modified residue" description="Phosphohistidine; by autocatalysis" evidence="4">
    <location>
        <position position="242"/>
    </location>
</feature>
<reference key="1">
    <citation type="journal article" date="2001" name="Lancet">
        <title>Whole genome sequencing of meticillin-resistant Staphylococcus aureus.</title>
        <authorList>
            <person name="Kuroda M."/>
            <person name="Ohta T."/>
            <person name="Uchiyama I."/>
            <person name="Baba T."/>
            <person name="Yuzawa H."/>
            <person name="Kobayashi I."/>
            <person name="Cui L."/>
            <person name="Oguchi A."/>
            <person name="Aoki K."/>
            <person name="Nagai Y."/>
            <person name="Lian J.-Q."/>
            <person name="Ito T."/>
            <person name="Kanamori M."/>
            <person name="Matsumaru H."/>
            <person name="Maruyama A."/>
            <person name="Murakami H."/>
            <person name="Hosoyama A."/>
            <person name="Mizutani-Ui Y."/>
            <person name="Takahashi N.K."/>
            <person name="Sawano T."/>
            <person name="Inoue R."/>
            <person name="Kaito C."/>
            <person name="Sekimizu K."/>
            <person name="Hirakawa H."/>
            <person name="Kuhara S."/>
            <person name="Goto S."/>
            <person name="Yabuzaki J."/>
            <person name="Kanehisa M."/>
            <person name="Yamashita A."/>
            <person name="Oshima K."/>
            <person name="Furuya K."/>
            <person name="Yoshino C."/>
            <person name="Shiba T."/>
            <person name="Hattori M."/>
            <person name="Ogasawara N."/>
            <person name="Hayashi H."/>
            <person name="Hiramatsu K."/>
        </authorList>
    </citation>
    <scope>NUCLEOTIDE SEQUENCE [LARGE SCALE GENOMIC DNA]</scope>
    <source>
        <strain>N315</strain>
    </source>
</reference>
<reference key="2">
    <citation type="submission" date="2007-10" db="UniProtKB">
        <title>Shotgun proteomic analysis of total and membrane protein extracts of S. aureus strain N315.</title>
        <authorList>
            <person name="Vaezzadeh A.R."/>
            <person name="Deshusses J."/>
            <person name="Lescuyer P."/>
            <person name="Hochstrasser D.F."/>
        </authorList>
    </citation>
    <scope>IDENTIFICATION BY MASS SPECTROMETRY [LARGE SCALE ANALYSIS]</scope>
    <source>
        <strain>N315</strain>
    </source>
</reference>